<name>FACOS_MOUSE</name>
<gene>
    <name type="primary">Fancd2os</name>
</gene>
<keyword id="KW-1185">Reference proteome</keyword>
<sequence>MAGYQLWSPWTPLDESFQWLRHTTPTPSSKHPFRASPCFPHTPSDLEVQLCLQEVTLVLDRPLVEPGESPKLPCHKSELRAVSNKKGVVRKPQPVRLSGVDSVFGRVITAQPPKWTGTFRVSDKSAFCKIISREHQWPTGLKEPQVQMTVTMCKQMLRSILLLYATYKKCTFALQHSK</sequence>
<dbReference type="EMBL" id="AK016461">
    <property type="protein sequence ID" value="BAB30250.1"/>
    <property type="molecule type" value="mRNA"/>
</dbReference>
<dbReference type="EMBL" id="BC042706">
    <property type="protein sequence ID" value="AAH42706.1"/>
    <property type="molecule type" value="mRNA"/>
</dbReference>
<dbReference type="EMBL" id="BC049660">
    <property type="protein sequence ID" value="AAH49660.1"/>
    <property type="molecule type" value="mRNA"/>
</dbReference>
<dbReference type="CCDS" id="CCDS20427.1"/>
<dbReference type="RefSeq" id="NP_081909.2">
    <property type="nucleotide sequence ID" value="NM_027633.3"/>
</dbReference>
<dbReference type="RefSeq" id="XP_006506672.1">
    <property type="nucleotide sequence ID" value="XM_006506609.3"/>
</dbReference>
<dbReference type="RefSeq" id="XP_006506673.1">
    <property type="nucleotide sequence ID" value="XM_006506610.3"/>
</dbReference>
<dbReference type="FunCoup" id="Q9D4K4">
    <property type="interactions" value="1"/>
</dbReference>
<dbReference type="STRING" id="10090.ENSMUSP00000035316"/>
<dbReference type="GlyGen" id="Q9D4K4">
    <property type="glycosylation" value="1 site"/>
</dbReference>
<dbReference type="PhosphoSitePlus" id="Q9D4K4"/>
<dbReference type="PaxDb" id="10090-ENSMUSP00000035316"/>
<dbReference type="ProteomicsDB" id="275583"/>
<dbReference type="GeneID" id="70979"/>
<dbReference type="KEGG" id="mmu:70979"/>
<dbReference type="UCSC" id="uc009dgy.2">
    <property type="organism name" value="mouse"/>
</dbReference>
<dbReference type="AGR" id="MGI:1918229"/>
<dbReference type="CTD" id="115795"/>
<dbReference type="MGI" id="MGI:1918229">
    <property type="gene designation" value="Fancd2os"/>
</dbReference>
<dbReference type="eggNOG" id="ENOG502S0QV">
    <property type="taxonomic scope" value="Eukaryota"/>
</dbReference>
<dbReference type="InParanoid" id="Q9D4K4"/>
<dbReference type="OrthoDB" id="9433753at2759"/>
<dbReference type="TreeFam" id="TF337186"/>
<dbReference type="BioGRID-ORCS" id="70979">
    <property type="hits" value="0 hits in 77 CRISPR screens"/>
</dbReference>
<dbReference type="ChiTaRS" id="Fancd2os">
    <property type="organism name" value="mouse"/>
</dbReference>
<dbReference type="PRO" id="PR:Q9D4K4"/>
<dbReference type="Proteomes" id="UP000000589">
    <property type="component" value="Unplaced"/>
</dbReference>
<dbReference type="RNAct" id="Q9D4K4">
    <property type="molecule type" value="protein"/>
</dbReference>
<dbReference type="InterPro" id="IPR027966">
    <property type="entry name" value="FANCD2OS"/>
</dbReference>
<dbReference type="PANTHER" id="PTHR31036">
    <property type="entry name" value="FANCD2 OPPOSITE STRAND PROTEIN"/>
    <property type="match status" value="1"/>
</dbReference>
<dbReference type="PANTHER" id="PTHR31036:SF0">
    <property type="entry name" value="FANCD2 OPPOSITE STRAND PROTEIN"/>
    <property type="match status" value="1"/>
</dbReference>
<dbReference type="Pfam" id="PF15124">
    <property type="entry name" value="FANCD2OS"/>
    <property type="match status" value="1"/>
</dbReference>
<protein>
    <recommendedName>
        <fullName>FANCD2 opposite strand protein</fullName>
    </recommendedName>
    <alternativeName>
        <fullName>Fanconi anemia group D2 protein opposite strand transcript protein</fullName>
    </alternativeName>
</protein>
<feature type="chain" id="PRO_0000235344" description="FANCD2 opposite strand protein">
    <location>
        <begin position="1"/>
        <end position="178"/>
    </location>
</feature>
<feature type="sequence conflict" description="In Ref. 2; AAH42706/AAH49660." evidence="1" ref="2">
    <original>K</original>
    <variation>T</variation>
    <location>
        <position position="76"/>
    </location>
</feature>
<evidence type="ECO:0000305" key="1"/>
<organism>
    <name type="scientific">Mus musculus</name>
    <name type="common">Mouse</name>
    <dbReference type="NCBI Taxonomy" id="10090"/>
    <lineage>
        <taxon>Eukaryota</taxon>
        <taxon>Metazoa</taxon>
        <taxon>Chordata</taxon>
        <taxon>Craniata</taxon>
        <taxon>Vertebrata</taxon>
        <taxon>Euteleostomi</taxon>
        <taxon>Mammalia</taxon>
        <taxon>Eutheria</taxon>
        <taxon>Euarchontoglires</taxon>
        <taxon>Glires</taxon>
        <taxon>Rodentia</taxon>
        <taxon>Myomorpha</taxon>
        <taxon>Muroidea</taxon>
        <taxon>Muridae</taxon>
        <taxon>Murinae</taxon>
        <taxon>Mus</taxon>
        <taxon>Mus</taxon>
    </lineage>
</organism>
<proteinExistence type="evidence at transcript level"/>
<reference key="1">
    <citation type="journal article" date="2005" name="Science">
        <title>The transcriptional landscape of the mammalian genome.</title>
        <authorList>
            <person name="Carninci P."/>
            <person name="Kasukawa T."/>
            <person name="Katayama S."/>
            <person name="Gough J."/>
            <person name="Frith M.C."/>
            <person name="Maeda N."/>
            <person name="Oyama R."/>
            <person name="Ravasi T."/>
            <person name="Lenhard B."/>
            <person name="Wells C."/>
            <person name="Kodzius R."/>
            <person name="Shimokawa K."/>
            <person name="Bajic V.B."/>
            <person name="Brenner S.E."/>
            <person name="Batalov S."/>
            <person name="Forrest A.R."/>
            <person name="Zavolan M."/>
            <person name="Davis M.J."/>
            <person name="Wilming L.G."/>
            <person name="Aidinis V."/>
            <person name="Allen J.E."/>
            <person name="Ambesi-Impiombato A."/>
            <person name="Apweiler R."/>
            <person name="Aturaliya R.N."/>
            <person name="Bailey T.L."/>
            <person name="Bansal M."/>
            <person name="Baxter L."/>
            <person name="Beisel K.W."/>
            <person name="Bersano T."/>
            <person name="Bono H."/>
            <person name="Chalk A.M."/>
            <person name="Chiu K.P."/>
            <person name="Choudhary V."/>
            <person name="Christoffels A."/>
            <person name="Clutterbuck D.R."/>
            <person name="Crowe M.L."/>
            <person name="Dalla E."/>
            <person name="Dalrymple B.P."/>
            <person name="de Bono B."/>
            <person name="Della Gatta G."/>
            <person name="di Bernardo D."/>
            <person name="Down T."/>
            <person name="Engstrom P."/>
            <person name="Fagiolini M."/>
            <person name="Faulkner G."/>
            <person name="Fletcher C.F."/>
            <person name="Fukushima T."/>
            <person name="Furuno M."/>
            <person name="Futaki S."/>
            <person name="Gariboldi M."/>
            <person name="Georgii-Hemming P."/>
            <person name="Gingeras T.R."/>
            <person name="Gojobori T."/>
            <person name="Green R.E."/>
            <person name="Gustincich S."/>
            <person name="Harbers M."/>
            <person name="Hayashi Y."/>
            <person name="Hensch T.K."/>
            <person name="Hirokawa N."/>
            <person name="Hill D."/>
            <person name="Huminiecki L."/>
            <person name="Iacono M."/>
            <person name="Ikeo K."/>
            <person name="Iwama A."/>
            <person name="Ishikawa T."/>
            <person name="Jakt M."/>
            <person name="Kanapin A."/>
            <person name="Katoh M."/>
            <person name="Kawasawa Y."/>
            <person name="Kelso J."/>
            <person name="Kitamura H."/>
            <person name="Kitano H."/>
            <person name="Kollias G."/>
            <person name="Krishnan S.P."/>
            <person name="Kruger A."/>
            <person name="Kummerfeld S.K."/>
            <person name="Kurochkin I.V."/>
            <person name="Lareau L.F."/>
            <person name="Lazarevic D."/>
            <person name="Lipovich L."/>
            <person name="Liu J."/>
            <person name="Liuni S."/>
            <person name="McWilliam S."/>
            <person name="Madan Babu M."/>
            <person name="Madera M."/>
            <person name="Marchionni L."/>
            <person name="Matsuda H."/>
            <person name="Matsuzawa S."/>
            <person name="Miki H."/>
            <person name="Mignone F."/>
            <person name="Miyake S."/>
            <person name="Morris K."/>
            <person name="Mottagui-Tabar S."/>
            <person name="Mulder N."/>
            <person name="Nakano N."/>
            <person name="Nakauchi H."/>
            <person name="Ng P."/>
            <person name="Nilsson R."/>
            <person name="Nishiguchi S."/>
            <person name="Nishikawa S."/>
            <person name="Nori F."/>
            <person name="Ohara O."/>
            <person name="Okazaki Y."/>
            <person name="Orlando V."/>
            <person name="Pang K.C."/>
            <person name="Pavan W.J."/>
            <person name="Pavesi G."/>
            <person name="Pesole G."/>
            <person name="Petrovsky N."/>
            <person name="Piazza S."/>
            <person name="Reed J."/>
            <person name="Reid J.F."/>
            <person name="Ring B.Z."/>
            <person name="Ringwald M."/>
            <person name="Rost B."/>
            <person name="Ruan Y."/>
            <person name="Salzberg S.L."/>
            <person name="Sandelin A."/>
            <person name="Schneider C."/>
            <person name="Schoenbach C."/>
            <person name="Sekiguchi K."/>
            <person name="Semple C.A."/>
            <person name="Seno S."/>
            <person name="Sessa L."/>
            <person name="Sheng Y."/>
            <person name="Shibata Y."/>
            <person name="Shimada H."/>
            <person name="Shimada K."/>
            <person name="Silva D."/>
            <person name="Sinclair B."/>
            <person name="Sperling S."/>
            <person name="Stupka E."/>
            <person name="Sugiura K."/>
            <person name="Sultana R."/>
            <person name="Takenaka Y."/>
            <person name="Taki K."/>
            <person name="Tammoja K."/>
            <person name="Tan S.L."/>
            <person name="Tang S."/>
            <person name="Taylor M.S."/>
            <person name="Tegner J."/>
            <person name="Teichmann S.A."/>
            <person name="Ueda H.R."/>
            <person name="van Nimwegen E."/>
            <person name="Verardo R."/>
            <person name="Wei C.L."/>
            <person name="Yagi K."/>
            <person name="Yamanishi H."/>
            <person name="Zabarovsky E."/>
            <person name="Zhu S."/>
            <person name="Zimmer A."/>
            <person name="Hide W."/>
            <person name="Bult C."/>
            <person name="Grimmond S.M."/>
            <person name="Teasdale R.D."/>
            <person name="Liu E.T."/>
            <person name="Brusic V."/>
            <person name="Quackenbush J."/>
            <person name="Wahlestedt C."/>
            <person name="Mattick J.S."/>
            <person name="Hume D.A."/>
            <person name="Kai C."/>
            <person name="Sasaki D."/>
            <person name="Tomaru Y."/>
            <person name="Fukuda S."/>
            <person name="Kanamori-Katayama M."/>
            <person name="Suzuki M."/>
            <person name="Aoki J."/>
            <person name="Arakawa T."/>
            <person name="Iida J."/>
            <person name="Imamura K."/>
            <person name="Itoh M."/>
            <person name="Kato T."/>
            <person name="Kawaji H."/>
            <person name="Kawagashira N."/>
            <person name="Kawashima T."/>
            <person name="Kojima M."/>
            <person name="Kondo S."/>
            <person name="Konno H."/>
            <person name="Nakano K."/>
            <person name="Ninomiya N."/>
            <person name="Nishio T."/>
            <person name="Okada M."/>
            <person name="Plessy C."/>
            <person name="Shibata K."/>
            <person name="Shiraki T."/>
            <person name="Suzuki S."/>
            <person name="Tagami M."/>
            <person name="Waki K."/>
            <person name="Watahiki A."/>
            <person name="Okamura-Oho Y."/>
            <person name="Suzuki H."/>
            <person name="Kawai J."/>
            <person name="Hayashizaki Y."/>
        </authorList>
    </citation>
    <scope>NUCLEOTIDE SEQUENCE [LARGE SCALE MRNA]</scope>
    <source>
        <strain>C57BL/6J</strain>
        <tissue>Testis</tissue>
    </source>
</reference>
<reference key="2">
    <citation type="journal article" date="2004" name="Genome Res.">
        <title>The status, quality, and expansion of the NIH full-length cDNA project: the Mammalian Gene Collection (MGC).</title>
        <authorList>
            <consortium name="The MGC Project Team"/>
        </authorList>
    </citation>
    <scope>NUCLEOTIDE SEQUENCE [LARGE SCALE MRNA]</scope>
    <source>
        <strain>FVB/N</strain>
        <tissue>Kidney</tissue>
        <tissue>Testis</tissue>
    </source>
</reference>
<accession>Q9D4K4</accession>
<accession>Q80XT0</accession>
<accession>Q80Y40</accession>